<evidence type="ECO:0000250" key="1"/>
<evidence type="ECO:0000250" key="2">
    <source>
        <dbReference type="UniProtKB" id="Q96PC3"/>
    </source>
</evidence>
<evidence type="ECO:0000305" key="3"/>
<gene>
    <name type="primary">Ap1s3</name>
</gene>
<sequence length="154" mass="18440">MIHFILLFSRQGKLRLQKWYTTLPDKERKKITRDIIQTVLSRGHRTSSFIDWKELKLVYKRYASLYFCCAIENQDNELLTLEIVHRYVELLDKYFGNVCELDIIFNFEKAYFILDEFIIGGEIQETSKKTAVKAIEDSDMLQETMEEYMNKPTF</sequence>
<name>AP1S3_MOUSE</name>
<accession>Q7TN05</accession>
<dbReference type="EMBL" id="BC054111">
    <property type="protein sequence ID" value="AAH54111.1"/>
    <property type="molecule type" value="mRNA"/>
</dbReference>
<dbReference type="EMBL" id="BC098237">
    <property type="protein sequence ID" value="AAH98237.1"/>
    <property type="molecule type" value="mRNA"/>
</dbReference>
<dbReference type="CCDS" id="CCDS35628.1"/>
<dbReference type="RefSeq" id="NP_898848.1">
    <property type="nucleotide sequence ID" value="NM_183027.3"/>
</dbReference>
<dbReference type="SMR" id="Q7TN05"/>
<dbReference type="ComplexPortal" id="CPX-5143">
    <property type="entry name" value="Ubiquitous AP-1 Adaptor complex, sigma1c variant"/>
</dbReference>
<dbReference type="FunCoup" id="Q7TN05">
    <property type="interactions" value="580"/>
</dbReference>
<dbReference type="STRING" id="10090.ENSMUSP00000125268"/>
<dbReference type="PhosphoSitePlus" id="Q7TN05"/>
<dbReference type="PaxDb" id="10090-ENSMUSP00000125268"/>
<dbReference type="ProteomicsDB" id="281893"/>
<dbReference type="Antibodypedia" id="54195">
    <property type="antibodies" value="101 antibodies from 14 providers"/>
</dbReference>
<dbReference type="DNASU" id="252903"/>
<dbReference type="Ensembl" id="ENSMUST00000162342.8">
    <property type="protein sequence ID" value="ENSMUSP00000125268.2"/>
    <property type="gene ID" value="ENSMUSG00000054702.15"/>
</dbReference>
<dbReference type="GeneID" id="252903"/>
<dbReference type="KEGG" id="mmu:252903"/>
<dbReference type="UCSC" id="uc011wnw.1">
    <property type="organism name" value="mouse"/>
</dbReference>
<dbReference type="AGR" id="MGI:1891304"/>
<dbReference type="CTD" id="130340"/>
<dbReference type="MGI" id="MGI:1891304">
    <property type="gene designation" value="Ap1s3"/>
</dbReference>
<dbReference type="VEuPathDB" id="HostDB:ENSMUSG00000054702"/>
<dbReference type="eggNOG" id="KOG0934">
    <property type="taxonomic scope" value="Eukaryota"/>
</dbReference>
<dbReference type="GeneTree" id="ENSGT00970000193372"/>
<dbReference type="HOGENOM" id="CLU_061221_1_3_1"/>
<dbReference type="InParanoid" id="Q7TN05"/>
<dbReference type="OMA" id="ETMAEYM"/>
<dbReference type="OrthoDB" id="371463at2759"/>
<dbReference type="PhylomeDB" id="Q7TN05"/>
<dbReference type="TreeFam" id="TF312921"/>
<dbReference type="Reactome" id="R-MMU-2132295">
    <property type="pathway name" value="MHC class II antigen presentation"/>
</dbReference>
<dbReference type="Reactome" id="R-MMU-432720">
    <property type="pathway name" value="Lysosome Vesicle Biogenesis"/>
</dbReference>
<dbReference type="Reactome" id="R-MMU-432722">
    <property type="pathway name" value="Golgi Associated Vesicle Biogenesis"/>
</dbReference>
<dbReference type="BioGRID-ORCS" id="252903">
    <property type="hits" value="0 hits in 77 CRISPR screens"/>
</dbReference>
<dbReference type="PRO" id="PR:Q7TN05"/>
<dbReference type="Proteomes" id="UP000000589">
    <property type="component" value="Chromosome 1"/>
</dbReference>
<dbReference type="RNAct" id="Q7TN05">
    <property type="molecule type" value="protein"/>
</dbReference>
<dbReference type="Bgee" id="ENSMUSG00000054702">
    <property type="expression patterns" value="Expressed in epiblast (generic) and 65 other cell types or tissues"/>
</dbReference>
<dbReference type="ExpressionAtlas" id="Q7TN05">
    <property type="expression patterns" value="baseline and differential"/>
</dbReference>
<dbReference type="GO" id="GO:0030121">
    <property type="term" value="C:AP-1 adaptor complex"/>
    <property type="evidence" value="ECO:0000303"/>
    <property type="project" value="ComplexPortal"/>
</dbReference>
<dbReference type="GO" id="GO:0005905">
    <property type="term" value="C:clathrin-coated pit"/>
    <property type="evidence" value="ECO:0007669"/>
    <property type="project" value="UniProtKB-SubCell"/>
</dbReference>
<dbReference type="GO" id="GO:0005769">
    <property type="term" value="C:early endosome"/>
    <property type="evidence" value="ECO:0000303"/>
    <property type="project" value="ComplexPortal"/>
</dbReference>
<dbReference type="GO" id="GO:0005765">
    <property type="term" value="C:lysosomal membrane"/>
    <property type="evidence" value="ECO:0000303"/>
    <property type="project" value="ComplexPortal"/>
</dbReference>
<dbReference type="GO" id="GO:0032588">
    <property type="term" value="C:trans-Golgi network membrane"/>
    <property type="evidence" value="ECO:0000303"/>
    <property type="project" value="ComplexPortal"/>
</dbReference>
<dbReference type="GO" id="GO:0035615">
    <property type="term" value="F:clathrin adaptor activity"/>
    <property type="evidence" value="ECO:0007669"/>
    <property type="project" value="InterPro"/>
</dbReference>
<dbReference type="GO" id="GO:0006886">
    <property type="term" value="P:intracellular protein transport"/>
    <property type="evidence" value="ECO:0007669"/>
    <property type="project" value="InterPro"/>
</dbReference>
<dbReference type="GO" id="GO:1903232">
    <property type="term" value="P:melanosome assembly"/>
    <property type="evidence" value="ECO:0000303"/>
    <property type="project" value="ComplexPortal"/>
</dbReference>
<dbReference type="GO" id="GO:0060155">
    <property type="term" value="P:platelet dense granule organization"/>
    <property type="evidence" value="ECO:0000303"/>
    <property type="project" value="ComplexPortal"/>
</dbReference>
<dbReference type="GO" id="GO:0006605">
    <property type="term" value="P:protein targeting"/>
    <property type="evidence" value="ECO:0000250"/>
    <property type="project" value="UniProtKB"/>
</dbReference>
<dbReference type="GO" id="GO:0016192">
    <property type="term" value="P:vesicle-mediated transport"/>
    <property type="evidence" value="ECO:0000303"/>
    <property type="project" value="ComplexPortal"/>
</dbReference>
<dbReference type="CDD" id="cd14831">
    <property type="entry name" value="AP1_sigma"/>
    <property type="match status" value="1"/>
</dbReference>
<dbReference type="FunFam" id="3.30.450.60:FF:000005">
    <property type="entry name" value="AP complex subunit sigma"/>
    <property type="match status" value="1"/>
</dbReference>
<dbReference type="Gene3D" id="3.30.450.60">
    <property type="match status" value="1"/>
</dbReference>
<dbReference type="InterPro" id="IPR044733">
    <property type="entry name" value="AP1_sigma"/>
</dbReference>
<dbReference type="InterPro" id="IPR016635">
    <property type="entry name" value="AP_complex_ssu"/>
</dbReference>
<dbReference type="InterPro" id="IPR022775">
    <property type="entry name" value="AP_mu_sigma_su"/>
</dbReference>
<dbReference type="InterPro" id="IPR000804">
    <property type="entry name" value="Clathrin_sm-chain_CS"/>
</dbReference>
<dbReference type="InterPro" id="IPR011012">
    <property type="entry name" value="Longin-like_dom_sf"/>
</dbReference>
<dbReference type="PANTHER" id="PTHR11753">
    <property type="entry name" value="ADAPTOR COMPLEXES SMALL SUBUNIT FAMILY"/>
    <property type="match status" value="1"/>
</dbReference>
<dbReference type="Pfam" id="PF01217">
    <property type="entry name" value="Clat_adaptor_s"/>
    <property type="match status" value="1"/>
</dbReference>
<dbReference type="PIRSF" id="PIRSF015588">
    <property type="entry name" value="AP_complex_sigma"/>
    <property type="match status" value="1"/>
</dbReference>
<dbReference type="SUPFAM" id="SSF64356">
    <property type="entry name" value="SNARE-like"/>
    <property type="match status" value="1"/>
</dbReference>
<dbReference type="PROSITE" id="PS00989">
    <property type="entry name" value="CLAT_ADAPTOR_S"/>
    <property type="match status" value="1"/>
</dbReference>
<comment type="function">
    <text evidence="2">Subunit of clathrin-associated adaptor protein complex 1 that plays a role in protein sorting in the late-Golgi/trans-Golgi network (TGN) and/or endosomes. The AP complexes mediate both the recruitment of clathrin to membranes and the recognition of sorting signals within the cytosolic tails of transmembrane cargo molecules (By similarity). Involved in TLR3 trafficking (By similarity).</text>
</comment>
<comment type="subunit">
    <text evidence="1">Adaptor protein complex 1 (AP-1) is a heterotetramer composed of two large adaptins (gamma-type subunit AP1G1 and beta-type subunit AP1B1), a medium adaptin (mu-type subunit AP1M1 or AP1M2) and a small adaptin (sigma-type subunit AP1S1 or AP1S2 or AP1S3).</text>
</comment>
<comment type="subcellular location">
    <subcellularLocation>
        <location>Golgi apparatus</location>
    </subcellularLocation>
    <subcellularLocation>
        <location evidence="1">Cytoplasmic vesicle membrane</location>
        <topology evidence="1">Peripheral membrane protein</topology>
        <orientation evidence="1">Cytoplasmic side</orientation>
    </subcellularLocation>
    <subcellularLocation>
        <location evidence="1">Membrane</location>
        <location evidence="1">Clathrin-coated pit</location>
    </subcellularLocation>
    <text evidence="1">Component of the coat surrounding the cytoplasmic face of coated vesicles located at the Golgi complex.</text>
</comment>
<comment type="similarity">
    <text evidence="3">Belongs to the adaptor complexes small subunit family.</text>
</comment>
<feature type="chain" id="PRO_0000193802" description="AP-1 complex subunit sigma-3">
    <location>
        <begin position="1"/>
        <end position="154"/>
    </location>
</feature>
<proteinExistence type="evidence at protein level"/>
<protein>
    <recommendedName>
        <fullName>AP-1 complex subunit sigma-3</fullName>
    </recommendedName>
    <alternativeName>
        <fullName>Adaptor protein complex AP-1 subunit sigma-1C</fullName>
    </alternativeName>
    <alternativeName>
        <fullName>Adaptor-related protein complex 1 subunit sigma-1C</fullName>
    </alternativeName>
    <alternativeName>
        <fullName>Clathrin assembly protein complex 1 sigma-1C small chain</fullName>
    </alternativeName>
    <alternativeName>
        <fullName>Golgi adaptor HA1/AP1 adaptin sigma-1C subunit</fullName>
    </alternativeName>
    <alternativeName>
        <fullName>Sigma 1C subunit of AP-1 clathrin</fullName>
    </alternativeName>
    <alternativeName>
        <fullName>Sigma-adaptin 1C</fullName>
    </alternativeName>
    <alternativeName>
        <fullName>Sigma1C-adaptin</fullName>
    </alternativeName>
</protein>
<reference key="1">
    <citation type="journal article" date="2004" name="Genome Res.">
        <title>The status, quality, and expansion of the NIH full-length cDNA project: the Mammalian Gene Collection (MGC).</title>
        <authorList>
            <consortium name="The MGC Project Team"/>
        </authorList>
    </citation>
    <scope>NUCLEOTIDE SEQUENCE [LARGE SCALE MRNA]</scope>
    <source>
        <strain>129</strain>
        <strain>C57BL/6J</strain>
        <tissue>Mammary tumor</tissue>
        <tissue>Thymus</tissue>
    </source>
</reference>
<reference key="2">
    <citation type="journal article" date="2010" name="Cell">
        <title>A tissue-specific atlas of mouse protein phosphorylation and expression.</title>
        <authorList>
            <person name="Huttlin E.L."/>
            <person name="Jedrychowski M.P."/>
            <person name="Elias J.E."/>
            <person name="Goswami T."/>
            <person name="Rad R."/>
            <person name="Beausoleil S.A."/>
            <person name="Villen J."/>
            <person name="Haas W."/>
            <person name="Sowa M.E."/>
            <person name="Gygi S.P."/>
        </authorList>
    </citation>
    <scope>IDENTIFICATION BY MASS SPECTROMETRY [LARGE SCALE ANALYSIS]</scope>
    <source>
        <tissue>Kidney</tissue>
        <tissue>Lung</tissue>
        <tissue>Spleen</tissue>
    </source>
</reference>
<keyword id="KW-0168">Coated pit</keyword>
<keyword id="KW-0968">Cytoplasmic vesicle</keyword>
<keyword id="KW-0333">Golgi apparatus</keyword>
<keyword id="KW-0472">Membrane</keyword>
<keyword id="KW-0653">Protein transport</keyword>
<keyword id="KW-1185">Reference proteome</keyword>
<keyword id="KW-0813">Transport</keyword>
<organism>
    <name type="scientific">Mus musculus</name>
    <name type="common">Mouse</name>
    <dbReference type="NCBI Taxonomy" id="10090"/>
    <lineage>
        <taxon>Eukaryota</taxon>
        <taxon>Metazoa</taxon>
        <taxon>Chordata</taxon>
        <taxon>Craniata</taxon>
        <taxon>Vertebrata</taxon>
        <taxon>Euteleostomi</taxon>
        <taxon>Mammalia</taxon>
        <taxon>Eutheria</taxon>
        <taxon>Euarchontoglires</taxon>
        <taxon>Glires</taxon>
        <taxon>Rodentia</taxon>
        <taxon>Myomorpha</taxon>
        <taxon>Muroidea</taxon>
        <taxon>Muridae</taxon>
        <taxon>Murinae</taxon>
        <taxon>Mus</taxon>
        <taxon>Mus</taxon>
    </lineage>
</organism>